<comment type="function">
    <text>Binds to sialic acid-containing receptors on the cell surface, bringing about the attachment of the virus particle to the cell. Plays a major role in the determination of host range restriction and virulence. Class I viral fusion protein. Responsible for penetration of the virus into the cell cytoplasm by mediating the fusion of the membrane of the endocytosed virus particle with the endosomal membrane. Low pH in endosomes induce an irreversible conformational change in HA2, releasing the fusion hydrophobic peptide. Several trimers are required to form a competent fusion pore.</text>
</comment>
<comment type="subunit">
    <text>Homotrimer of disulfide-linked HA1-HA2.</text>
</comment>
<comment type="subcellular location">
    <subcellularLocation>
        <location evidence="3">Virion membrane</location>
        <topology evidence="3">Single-pass type I membrane protein</topology>
    </subcellularLocation>
    <subcellularLocation>
        <location>Host apical cell membrane</location>
        <topology>Single-pass type I membrane protein</topology>
    </subcellularLocation>
    <text>Targeted to the apical plasma membrane in epithelial polarized cells through a signal present in the transmembrane domain. Associated with glycosphingolipid- and cholesterol-enriched detergent-resistant lipid rafts.</text>
</comment>
<comment type="PTM">
    <text evidence="1">In natural infection, inactive HA is matured into HA1 and HA2 outside the cell by one or more trypsin-like, arginine-specific endoprotease secreted by the bronchial epithelial cells. One identified protease that may be involved in this process is secreted in lungs by club cells (By similarity).</text>
</comment>
<comment type="PTM">
    <text evidence="1">Palmitoylated.</text>
</comment>
<comment type="miscellaneous">
    <text>Major glycoprotein, comprises over 80% of the envelope proteins present in virus particle.</text>
</comment>
<comment type="miscellaneous">
    <text>The extent of infection into host organism is determined by HA. Influenza viruses bud from the apical surface of polarized epithelial cells (e.g. bronchial epithelial cells) into lumen of lungs and are therefore usually pneumotropic. The reason is that HA is cleaved by tryptase clara which is restricted to lungs. However, HAs of H5 and H7 pantropic avian viruses subtypes can be cleaved by furin and subtilisin-type enzymes, allowing the virus to grow in other organs than lungs.</text>
</comment>
<comment type="miscellaneous">
    <text>The influenza B genome consist of 8 RNA segments. Genetic variation of hemagglutinin and/or neuraminidase genes results in the emergence of new influenza strains. The mechanism of variation can be the result of point mutations or the result of genetic reassortment between segments of two different strains.</text>
</comment>
<comment type="similarity">
    <text evidence="3">Belongs to the influenza viruses hemagglutinin family.</text>
</comment>
<protein>
    <recommendedName>
        <fullName>Hemagglutinin</fullName>
    </recommendedName>
    <component>
        <recommendedName>
            <fullName>Hemagglutinin HA1 chain</fullName>
        </recommendedName>
    </component>
</protein>
<reference key="1">
    <citation type="journal article" date="1992" name="J. Gen. Virol.">
        <title>Evolution of influenza B/Victoria/2/87-like viruses: occurrence of a genetically conserved virus under conditions of low epidemic activity.</title>
        <authorList>
            <person name="Kinnunen L."/>
            <person name="Ikonen N."/>
            <person name="Poeyry T."/>
            <person name="Pyhaelae R."/>
        </authorList>
    </citation>
    <scope>NUCLEOTIDE SEQUENCE [GENOMIC RNA]</scope>
</reference>
<accession>P68760</accession>
<accession>Q07924</accession>
<gene>
    <name type="primary">HA</name>
</gene>
<proteinExistence type="inferred from homology"/>
<sequence>DRICTGITSSNSPHVVKTATQGEVNVTGVIPLTTTPTKSHFANLKGTKTRGKLCPKCLNCTDLDVALGRPKCTGTIPSAKASILHEVKPVTSGCFPIMHDRTKXRQLPNLLRGYEHIRLSTHNVINAEKAPGGPYKIGTSGSCPNVTNGNGFFATMAWAVPKNDNNKTATNSLTVEVPYICTEGEDQITVWGFHSDNETQMVKLYGDSKPQKFTSSANGVTTHYVSQIGGFPNQAEDGGLPQSGRIVVDYMVQKSGKTGTITYQRGILLPQKVWCASGRSKVIKGSLPLIGEADCLHEKYGGLNKSKPYYTGEHAKAIGNCPIWVKTPLKLANGTKYRPPAKLLKER</sequence>
<name>HEMA_INBF8</name>
<organism>
    <name type="scientific">Influenza B virus (strain B/Finland/150/1990)</name>
    <dbReference type="NCBI Taxonomy" id="38994"/>
    <lineage>
        <taxon>Viruses</taxon>
        <taxon>Riboviria</taxon>
        <taxon>Orthornavirae</taxon>
        <taxon>Negarnaviricota</taxon>
        <taxon>Polyploviricotina</taxon>
        <taxon>Insthoviricetes</taxon>
        <taxon>Articulavirales</taxon>
        <taxon>Orthomyxoviridae</taxon>
        <taxon>Betainfluenzavirus</taxon>
        <taxon>Betainfluenzavirus influenzae</taxon>
        <taxon>Influenza B virus</taxon>
    </lineage>
</organism>
<organismHost>
    <name type="scientific">Homo sapiens</name>
    <name type="common">Human</name>
    <dbReference type="NCBI Taxonomy" id="9606"/>
</organismHost>
<evidence type="ECO:0000250" key="1"/>
<evidence type="ECO:0000255" key="2"/>
<evidence type="ECO:0000305" key="3"/>
<keyword id="KW-1015">Disulfide bond</keyword>
<keyword id="KW-1170">Fusion of virus membrane with host endosomal membrane</keyword>
<keyword id="KW-1168">Fusion of virus membrane with host membrane</keyword>
<keyword id="KW-0325">Glycoprotein</keyword>
<keyword id="KW-0348">Hemagglutinin</keyword>
<keyword id="KW-1032">Host cell membrane</keyword>
<keyword id="KW-1043">Host membrane</keyword>
<keyword id="KW-0945">Host-virus interaction</keyword>
<keyword id="KW-0449">Lipoprotein</keyword>
<keyword id="KW-0472">Membrane</keyword>
<keyword id="KW-0564">Palmitate</keyword>
<keyword id="KW-0812">Transmembrane</keyword>
<keyword id="KW-1161">Viral attachment to host cell</keyword>
<keyword id="KW-0261">Viral envelope protein</keyword>
<keyword id="KW-1162">Viral penetration into host cytoplasm</keyword>
<keyword id="KW-0946">Virion</keyword>
<keyword id="KW-1160">Virus entry into host cell</keyword>
<feature type="chain" id="PRO_0000039100" description="Hemagglutinin HA1 chain">
    <location>
        <begin position="1"/>
        <end position="346"/>
    </location>
</feature>
<feature type="glycosylation site" description="N-linked (GlcNAc...) asparagine; by host" evidence="2">
    <location>
        <position position="25"/>
    </location>
</feature>
<feature type="glycosylation site" description="N-linked (GlcNAc...) asparagine; by host" evidence="2">
    <location>
        <position position="59"/>
    </location>
</feature>
<feature type="glycosylation site" description="N-linked (GlcNAc...) asparagine; by host" evidence="2">
    <location>
        <position position="145"/>
    </location>
</feature>
<feature type="glycosylation site" description="N-linked (GlcNAc...) asparagine; by host" evidence="2">
    <location>
        <position position="166"/>
    </location>
</feature>
<feature type="glycosylation site" description="N-linked (GlcNAc...) asparagine; by host" evidence="2">
    <location>
        <position position="304"/>
    </location>
</feature>
<feature type="glycosylation site" description="N-linked (GlcNAc...) asparagine; by host" evidence="2">
    <location>
        <position position="333"/>
    </location>
</feature>
<feature type="non-terminal residue">
    <location>
        <position position="1"/>
    </location>
</feature>
<feature type="non-terminal residue">
    <location>
        <position position="347"/>
    </location>
</feature>
<dbReference type="EMBL" id="L19642">
    <property type="protein sequence ID" value="AAA50370.1"/>
    <property type="molecule type" value="Genomic_RNA"/>
</dbReference>
<dbReference type="GlyCosmos" id="P68760">
    <property type="glycosylation" value="6 sites, No reported glycans"/>
</dbReference>
<dbReference type="GO" id="GO:0020002">
    <property type="term" value="C:host cell plasma membrane"/>
    <property type="evidence" value="ECO:0007669"/>
    <property type="project" value="UniProtKB-SubCell"/>
</dbReference>
<dbReference type="GO" id="GO:0016020">
    <property type="term" value="C:membrane"/>
    <property type="evidence" value="ECO:0007669"/>
    <property type="project" value="UniProtKB-KW"/>
</dbReference>
<dbReference type="GO" id="GO:0019031">
    <property type="term" value="C:viral envelope"/>
    <property type="evidence" value="ECO:0007669"/>
    <property type="project" value="UniProtKB-KW"/>
</dbReference>
<dbReference type="GO" id="GO:0055036">
    <property type="term" value="C:virion membrane"/>
    <property type="evidence" value="ECO:0007669"/>
    <property type="project" value="UniProtKB-SubCell"/>
</dbReference>
<dbReference type="GO" id="GO:0046789">
    <property type="term" value="F:host cell surface receptor binding"/>
    <property type="evidence" value="ECO:0007669"/>
    <property type="project" value="InterPro"/>
</dbReference>
<dbReference type="GO" id="GO:0039654">
    <property type="term" value="P:fusion of virus membrane with host endosome membrane"/>
    <property type="evidence" value="ECO:0007669"/>
    <property type="project" value="UniProtKB-KW"/>
</dbReference>
<dbReference type="GO" id="GO:0019064">
    <property type="term" value="P:fusion of virus membrane with host plasma membrane"/>
    <property type="evidence" value="ECO:0007669"/>
    <property type="project" value="InterPro"/>
</dbReference>
<dbReference type="GO" id="GO:0046718">
    <property type="term" value="P:symbiont entry into host cell"/>
    <property type="evidence" value="ECO:0007669"/>
    <property type="project" value="UniProtKB-KW"/>
</dbReference>
<dbReference type="GO" id="GO:0019062">
    <property type="term" value="P:virion attachment to host cell"/>
    <property type="evidence" value="ECO:0007669"/>
    <property type="project" value="UniProtKB-KW"/>
</dbReference>
<dbReference type="Gene3D" id="3.90.209.20">
    <property type="match status" value="1"/>
</dbReference>
<dbReference type="Gene3D" id="2.10.77.10">
    <property type="entry name" value="Hemagglutinin Chain A, Domain 2"/>
    <property type="match status" value="1"/>
</dbReference>
<dbReference type="InterPro" id="IPR008980">
    <property type="entry name" value="Capsid_hemagglutn"/>
</dbReference>
<dbReference type="InterPro" id="IPR013828">
    <property type="entry name" value="Hemagglutn_HA1_a/b_dom_sf"/>
</dbReference>
<dbReference type="InterPro" id="IPR001364">
    <property type="entry name" value="Hemagglutn_influenz_A/B"/>
</dbReference>
<dbReference type="Pfam" id="PF00509">
    <property type="entry name" value="Hemagglutinin"/>
    <property type="match status" value="1"/>
</dbReference>
<dbReference type="SUPFAM" id="SSF49818">
    <property type="entry name" value="Viral protein domain"/>
    <property type="match status" value="1"/>
</dbReference>